<reference key="1">
    <citation type="journal article" date="2009" name="J. Bacteriol.">
        <title>Genomic sequencing reveals regulatory mutations and recombinational events in the widely used MC4100 lineage of Escherichia coli K-12.</title>
        <authorList>
            <person name="Ferenci T."/>
            <person name="Zhou Z."/>
            <person name="Betteridge T."/>
            <person name="Ren Y."/>
            <person name="Liu Y."/>
            <person name="Feng L."/>
            <person name="Reeves P.R."/>
            <person name="Wang L."/>
        </authorList>
    </citation>
    <scope>NUCLEOTIDE SEQUENCE [LARGE SCALE GENOMIC DNA]</scope>
    <source>
        <strain>K12 / MC4100 / BW2952</strain>
    </source>
</reference>
<evidence type="ECO:0000255" key="1">
    <source>
        <dbReference type="HAMAP-Rule" id="MF_01023"/>
    </source>
</evidence>
<feature type="chain" id="PRO_1000213306" description="Histidinol-phosphate aminotransferase">
    <location>
        <begin position="1"/>
        <end position="356"/>
    </location>
</feature>
<feature type="modified residue" description="N6-(pyridoxal phosphate)lysine" evidence="1">
    <location>
        <position position="214"/>
    </location>
</feature>
<keyword id="KW-0028">Amino-acid biosynthesis</keyword>
<keyword id="KW-0032">Aminotransferase</keyword>
<keyword id="KW-0368">Histidine biosynthesis</keyword>
<keyword id="KW-0663">Pyridoxal phosphate</keyword>
<keyword id="KW-0808">Transferase</keyword>
<comment type="catalytic activity">
    <reaction evidence="1">
        <text>L-histidinol phosphate + 2-oxoglutarate = 3-(imidazol-4-yl)-2-oxopropyl phosphate + L-glutamate</text>
        <dbReference type="Rhea" id="RHEA:23744"/>
        <dbReference type="ChEBI" id="CHEBI:16810"/>
        <dbReference type="ChEBI" id="CHEBI:29985"/>
        <dbReference type="ChEBI" id="CHEBI:57766"/>
        <dbReference type="ChEBI" id="CHEBI:57980"/>
        <dbReference type="EC" id="2.6.1.9"/>
    </reaction>
</comment>
<comment type="cofactor">
    <cofactor evidence="1">
        <name>pyridoxal 5'-phosphate</name>
        <dbReference type="ChEBI" id="CHEBI:597326"/>
    </cofactor>
</comment>
<comment type="pathway">
    <text evidence="1">Amino-acid biosynthesis; L-histidine biosynthesis; L-histidine from 5-phospho-alpha-D-ribose 1-diphosphate: step 7/9.</text>
</comment>
<comment type="subunit">
    <text evidence="1">Homodimer.</text>
</comment>
<comment type="similarity">
    <text evidence="1">Belongs to the class-II pyridoxal-phosphate-dependent aminotransferase family. Histidinol-phosphate aminotransferase subfamily.</text>
</comment>
<gene>
    <name evidence="1" type="primary">hisC</name>
    <name type="ordered locus">BWG_1812</name>
</gene>
<accession>C4ZSB0</accession>
<organism>
    <name type="scientific">Escherichia coli (strain K12 / MC4100 / BW2952)</name>
    <dbReference type="NCBI Taxonomy" id="595496"/>
    <lineage>
        <taxon>Bacteria</taxon>
        <taxon>Pseudomonadati</taxon>
        <taxon>Pseudomonadota</taxon>
        <taxon>Gammaproteobacteria</taxon>
        <taxon>Enterobacterales</taxon>
        <taxon>Enterobacteriaceae</taxon>
        <taxon>Escherichia</taxon>
    </lineage>
</organism>
<protein>
    <recommendedName>
        <fullName evidence="1">Histidinol-phosphate aminotransferase</fullName>
        <ecNumber evidence="1">2.6.1.9</ecNumber>
    </recommendedName>
    <alternativeName>
        <fullName evidence="1">Imidazole acetol-phosphate transaminase</fullName>
    </alternativeName>
</protein>
<dbReference type="EC" id="2.6.1.9" evidence="1"/>
<dbReference type="EMBL" id="CP001396">
    <property type="protein sequence ID" value="ACR63422.1"/>
    <property type="molecule type" value="Genomic_DNA"/>
</dbReference>
<dbReference type="RefSeq" id="WP_000108941.1">
    <property type="nucleotide sequence ID" value="NC_012759.1"/>
</dbReference>
<dbReference type="SMR" id="C4ZSB0"/>
<dbReference type="KEGG" id="ebw:BWG_1812"/>
<dbReference type="HOGENOM" id="CLU_017584_3_1_6"/>
<dbReference type="UniPathway" id="UPA00031">
    <property type="reaction ID" value="UER00012"/>
</dbReference>
<dbReference type="GO" id="GO:0004400">
    <property type="term" value="F:histidinol-phosphate transaminase activity"/>
    <property type="evidence" value="ECO:0007669"/>
    <property type="project" value="UniProtKB-UniRule"/>
</dbReference>
<dbReference type="GO" id="GO:0030170">
    <property type="term" value="F:pyridoxal phosphate binding"/>
    <property type="evidence" value="ECO:0007669"/>
    <property type="project" value="InterPro"/>
</dbReference>
<dbReference type="GO" id="GO:0000105">
    <property type="term" value="P:L-histidine biosynthetic process"/>
    <property type="evidence" value="ECO:0007669"/>
    <property type="project" value="UniProtKB-UniRule"/>
</dbReference>
<dbReference type="CDD" id="cd00609">
    <property type="entry name" value="AAT_like"/>
    <property type="match status" value="1"/>
</dbReference>
<dbReference type="FunFam" id="3.40.640.10:FF:000032">
    <property type="entry name" value="Histidinol-phosphate aminotransferase"/>
    <property type="match status" value="1"/>
</dbReference>
<dbReference type="FunFam" id="3.90.1150.10:FF:000042">
    <property type="entry name" value="Histidinol-phosphate aminotransferase"/>
    <property type="match status" value="1"/>
</dbReference>
<dbReference type="Gene3D" id="3.90.1150.10">
    <property type="entry name" value="Aspartate Aminotransferase, domain 1"/>
    <property type="match status" value="1"/>
</dbReference>
<dbReference type="Gene3D" id="3.40.640.10">
    <property type="entry name" value="Type I PLP-dependent aspartate aminotransferase-like (Major domain)"/>
    <property type="match status" value="1"/>
</dbReference>
<dbReference type="HAMAP" id="MF_01023">
    <property type="entry name" value="HisC_aminotrans_2"/>
    <property type="match status" value="1"/>
</dbReference>
<dbReference type="InterPro" id="IPR001917">
    <property type="entry name" value="Aminotrans_II_pyridoxalP_BS"/>
</dbReference>
<dbReference type="InterPro" id="IPR004839">
    <property type="entry name" value="Aminotransferase_I/II_large"/>
</dbReference>
<dbReference type="InterPro" id="IPR005861">
    <property type="entry name" value="HisP_aminotrans"/>
</dbReference>
<dbReference type="InterPro" id="IPR015424">
    <property type="entry name" value="PyrdxlP-dep_Trfase"/>
</dbReference>
<dbReference type="InterPro" id="IPR015421">
    <property type="entry name" value="PyrdxlP-dep_Trfase_major"/>
</dbReference>
<dbReference type="InterPro" id="IPR015422">
    <property type="entry name" value="PyrdxlP-dep_Trfase_small"/>
</dbReference>
<dbReference type="NCBIfam" id="TIGR01141">
    <property type="entry name" value="hisC"/>
    <property type="match status" value="1"/>
</dbReference>
<dbReference type="PANTHER" id="PTHR42885:SF2">
    <property type="entry name" value="HISTIDINOL-PHOSPHATE AMINOTRANSFERASE"/>
    <property type="match status" value="1"/>
</dbReference>
<dbReference type="PANTHER" id="PTHR42885">
    <property type="entry name" value="HISTIDINOL-PHOSPHATE AMINOTRANSFERASE-RELATED"/>
    <property type="match status" value="1"/>
</dbReference>
<dbReference type="Pfam" id="PF00155">
    <property type="entry name" value="Aminotran_1_2"/>
    <property type="match status" value="1"/>
</dbReference>
<dbReference type="SUPFAM" id="SSF53383">
    <property type="entry name" value="PLP-dependent transferases"/>
    <property type="match status" value="1"/>
</dbReference>
<dbReference type="PROSITE" id="PS00599">
    <property type="entry name" value="AA_TRANSFER_CLASS_2"/>
    <property type="match status" value="1"/>
</dbReference>
<proteinExistence type="inferred from homology"/>
<sequence>MSTVTITDLARENVRNLTPYQSARRLGGNGDVWLNANEYPTAVEFQLTQQTLNRYPECQPKAVIENYAQYAGVKPEQVLVSRGADEGIELLIRAFCEPGKDAILYCPPTYGMYSVSAETIGVECRTVPTLDNWQLDLQGISDKLDGVKVVYVCSPNNPTGQLINPQDFRTLLELTRGKAIVVADEAYIEFCPQASLAGWLAEYPHLAILRTLSKAFALAGLRCGFTLANEEVINLLMKVIAPYPLSTPVADIAAQALSPQGIVAMRERVAQIIAEREYLIAALKEIPCVEQVFDSETNYILARFKASSAVFKSLWDQGIILRDQNKQPSLSGCLRITVGTREESQRVIDALRAEQV</sequence>
<name>HIS8_ECOBW</name>